<reference key="1">
    <citation type="journal article" date="2004" name="Nat. Genet.">
        <title>Comparison of genome degradation in Paratyphi A and Typhi, human-restricted serovars of Salmonella enterica that cause typhoid.</title>
        <authorList>
            <person name="McClelland M."/>
            <person name="Sanderson K.E."/>
            <person name="Clifton S.W."/>
            <person name="Latreille P."/>
            <person name="Porwollik S."/>
            <person name="Sabo A."/>
            <person name="Meyer R."/>
            <person name="Bieri T."/>
            <person name="Ozersky P."/>
            <person name="McLellan M."/>
            <person name="Harkins C.R."/>
            <person name="Wang C."/>
            <person name="Nguyen C."/>
            <person name="Berghoff A."/>
            <person name="Elliott G."/>
            <person name="Kohlberg S."/>
            <person name="Strong C."/>
            <person name="Du F."/>
            <person name="Carter J."/>
            <person name="Kremizki C."/>
            <person name="Layman D."/>
            <person name="Leonard S."/>
            <person name="Sun H."/>
            <person name="Fulton L."/>
            <person name="Nash W."/>
            <person name="Miner T."/>
            <person name="Minx P."/>
            <person name="Delehaunty K."/>
            <person name="Fronick C."/>
            <person name="Magrini V."/>
            <person name="Nhan M."/>
            <person name="Warren W."/>
            <person name="Florea L."/>
            <person name="Spieth J."/>
            <person name="Wilson R.K."/>
        </authorList>
    </citation>
    <scope>NUCLEOTIDE SEQUENCE [LARGE SCALE GENOMIC DNA]</scope>
    <source>
        <strain>ATCC 9150 / SARB42</strain>
    </source>
</reference>
<feature type="chain" id="PRO_1000045436" description="High frequency lysogenization protein HflD homolog">
    <location>
        <begin position="1"/>
        <end position="213"/>
    </location>
</feature>
<feature type="coiled-coil region" evidence="1">
    <location>
        <begin position="79"/>
        <end position="122"/>
    </location>
</feature>
<gene>
    <name evidence="1" type="primary">hflD</name>
    <name type="ordered locus">SPA1617</name>
</gene>
<name>HFLD_SALPA</name>
<protein>
    <recommendedName>
        <fullName evidence="1">High frequency lysogenization protein HflD homolog</fullName>
    </recommendedName>
</protein>
<proteinExistence type="inferred from homology"/>
<comment type="subcellular location">
    <subcellularLocation>
        <location>Cytoplasm</location>
    </subcellularLocation>
    <subcellularLocation>
        <location evidence="1">Cell inner membrane</location>
        <topology evidence="1">Peripheral membrane protein</topology>
        <orientation evidence="1">Cytoplasmic side</orientation>
    </subcellularLocation>
</comment>
<comment type="similarity">
    <text evidence="1">Belongs to the HflD family.</text>
</comment>
<dbReference type="EMBL" id="CP000026">
    <property type="protein sequence ID" value="AAV77544.1"/>
    <property type="molecule type" value="Genomic_DNA"/>
</dbReference>
<dbReference type="RefSeq" id="WP_001519653.1">
    <property type="nucleotide sequence ID" value="NC_006511.1"/>
</dbReference>
<dbReference type="SMR" id="Q5PMJ3"/>
<dbReference type="KEGG" id="spt:SPA1617"/>
<dbReference type="HOGENOM" id="CLU_098920_0_0_6"/>
<dbReference type="Proteomes" id="UP000008185">
    <property type="component" value="Chromosome"/>
</dbReference>
<dbReference type="GO" id="GO:0005737">
    <property type="term" value="C:cytoplasm"/>
    <property type="evidence" value="ECO:0007669"/>
    <property type="project" value="UniProtKB-SubCell"/>
</dbReference>
<dbReference type="GO" id="GO:0005886">
    <property type="term" value="C:plasma membrane"/>
    <property type="evidence" value="ECO:0007669"/>
    <property type="project" value="UniProtKB-SubCell"/>
</dbReference>
<dbReference type="FunFam" id="1.10.3890.10:FF:000001">
    <property type="entry name" value="High frequency lysogenization protein HflD homolog"/>
    <property type="match status" value="1"/>
</dbReference>
<dbReference type="Gene3D" id="1.10.3890.10">
    <property type="entry name" value="HflD-like"/>
    <property type="match status" value="1"/>
</dbReference>
<dbReference type="HAMAP" id="MF_00695">
    <property type="entry name" value="HflD_protein"/>
    <property type="match status" value="1"/>
</dbReference>
<dbReference type="InterPro" id="IPR007451">
    <property type="entry name" value="HflD"/>
</dbReference>
<dbReference type="InterPro" id="IPR035932">
    <property type="entry name" value="HflD-like_sf"/>
</dbReference>
<dbReference type="NCBIfam" id="NF001245">
    <property type="entry name" value="PRK00218.1-1"/>
    <property type="match status" value="1"/>
</dbReference>
<dbReference type="NCBIfam" id="NF001246">
    <property type="entry name" value="PRK00218.1-2"/>
    <property type="match status" value="1"/>
</dbReference>
<dbReference type="NCBIfam" id="NF001248">
    <property type="entry name" value="PRK00218.1-4"/>
    <property type="match status" value="1"/>
</dbReference>
<dbReference type="NCBIfam" id="NF001249">
    <property type="entry name" value="PRK00218.1-5"/>
    <property type="match status" value="1"/>
</dbReference>
<dbReference type="PANTHER" id="PTHR38100">
    <property type="entry name" value="HIGH FREQUENCY LYSOGENIZATION PROTEIN HFLD"/>
    <property type="match status" value="1"/>
</dbReference>
<dbReference type="PANTHER" id="PTHR38100:SF1">
    <property type="entry name" value="HIGH FREQUENCY LYSOGENIZATION PROTEIN HFLD"/>
    <property type="match status" value="1"/>
</dbReference>
<dbReference type="Pfam" id="PF04356">
    <property type="entry name" value="DUF489"/>
    <property type="match status" value="1"/>
</dbReference>
<dbReference type="SUPFAM" id="SSF101322">
    <property type="entry name" value="YcfC-like"/>
    <property type="match status" value="1"/>
</dbReference>
<evidence type="ECO:0000255" key="1">
    <source>
        <dbReference type="HAMAP-Rule" id="MF_00695"/>
    </source>
</evidence>
<keyword id="KW-0997">Cell inner membrane</keyword>
<keyword id="KW-1003">Cell membrane</keyword>
<keyword id="KW-0175">Coiled coil</keyword>
<keyword id="KW-0963">Cytoplasm</keyword>
<keyword id="KW-0472">Membrane</keyword>
<organism>
    <name type="scientific">Salmonella paratyphi A (strain ATCC 9150 / SARB42)</name>
    <dbReference type="NCBI Taxonomy" id="295319"/>
    <lineage>
        <taxon>Bacteria</taxon>
        <taxon>Pseudomonadati</taxon>
        <taxon>Pseudomonadota</taxon>
        <taxon>Gammaproteobacteria</taxon>
        <taxon>Enterobacterales</taxon>
        <taxon>Enterobacteriaceae</taxon>
        <taxon>Salmonella</taxon>
    </lineage>
</organism>
<sequence length="213" mass="22916">MAKNYYDITLALSGICQSARLVQQLAHQGHCDADALHVSLNSVIDMNPSSTLGVFGGSEANLRLGLETLLGVLNASSRQGLNAELTRYTLSLMVLERKLSSAKGALNTLGDRINGLQRQLDHFDLQSDTLMSAMAGIYVDVISPLGPRIQVTGSPAVLQSPQVQAKVRASLLAGIRAAVLWHQVGGGRLQLMFSRHRLTTQAKQILAHLTPEL</sequence>
<accession>Q5PMJ3</accession>